<organism>
    <name type="scientific">Aeromonas hydrophila subsp. hydrophila (strain ATCC 7966 / DSM 30187 / BCRC 13018 / CCUG 14551 / JCM 1027 / KCTC 2358 / NCIMB 9240 / NCTC 8049)</name>
    <dbReference type="NCBI Taxonomy" id="380703"/>
    <lineage>
        <taxon>Bacteria</taxon>
        <taxon>Pseudomonadati</taxon>
        <taxon>Pseudomonadota</taxon>
        <taxon>Gammaproteobacteria</taxon>
        <taxon>Aeromonadales</taxon>
        <taxon>Aeromonadaceae</taxon>
        <taxon>Aeromonas</taxon>
    </lineage>
</organism>
<protein>
    <recommendedName>
        <fullName evidence="1">Undecaprenyl-phosphate 4-deoxy-4-formamido-L-arabinose transferase</fullName>
        <ecNumber evidence="1">2.4.2.53</ecNumber>
    </recommendedName>
    <alternativeName>
        <fullName evidence="1">Undecaprenyl-phosphate Ara4FN transferase</fullName>
        <shortName evidence="1">Ara4FN transferase</shortName>
    </alternativeName>
</protein>
<dbReference type="EC" id="2.4.2.53" evidence="1"/>
<dbReference type="EMBL" id="CP000462">
    <property type="protein sequence ID" value="ABK39590.1"/>
    <property type="molecule type" value="Genomic_DNA"/>
</dbReference>
<dbReference type="RefSeq" id="WP_011704926.1">
    <property type="nucleotide sequence ID" value="NC_008570.1"/>
</dbReference>
<dbReference type="RefSeq" id="YP_855537.1">
    <property type="nucleotide sequence ID" value="NC_008570.1"/>
</dbReference>
<dbReference type="SMR" id="A0KGY7"/>
<dbReference type="STRING" id="380703.AHA_0991"/>
<dbReference type="CAZy" id="GT2">
    <property type="family name" value="Glycosyltransferase Family 2"/>
</dbReference>
<dbReference type="EnsemblBacteria" id="ABK39590">
    <property type="protein sequence ID" value="ABK39590"/>
    <property type="gene ID" value="AHA_0991"/>
</dbReference>
<dbReference type="GeneID" id="4487532"/>
<dbReference type="KEGG" id="aha:AHA_0991"/>
<dbReference type="PATRIC" id="fig|380703.7.peg.995"/>
<dbReference type="eggNOG" id="COG0463">
    <property type="taxonomic scope" value="Bacteria"/>
</dbReference>
<dbReference type="HOGENOM" id="CLU_033536_0_0_6"/>
<dbReference type="OrthoDB" id="9811884at2"/>
<dbReference type="UniPathway" id="UPA00030"/>
<dbReference type="UniPathway" id="UPA00036">
    <property type="reaction ID" value="UER00495"/>
</dbReference>
<dbReference type="Proteomes" id="UP000000756">
    <property type="component" value="Chromosome"/>
</dbReference>
<dbReference type="GO" id="GO:0005886">
    <property type="term" value="C:plasma membrane"/>
    <property type="evidence" value="ECO:0007669"/>
    <property type="project" value="UniProtKB-SubCell"/>
</dbReference>
<dbReference type="GO" id="GO:0016780">
    <property type="term" value="F:phosphotransferase activity, for other substituted phosphate groups"/>
    <property type="evidence" value="ECO:0007669"/>
    <property type="project" value="UniProtKB-UniRule"/>
</dbReference>
<dbReference type="GO" id="GO:0099621">
    <property type="term" value="F:undecaprenyl-phosphate 4-deoxy-4-formamido-L-arabinose transferase activity"/>
    <property type="evidence" value="ECO:0007669"/>
    <property type="project" value="UniProtKB-EC"/>
</dbReference>
<dbReference type="GO" id="GO:0036108">
    <property type="term" value="P:4-amino-4-deoxy-alpha-L-arabinopyranosyl undecaprenyl phosphate biosynthetic process"/>
    <property type="evidence" value="ECO:0007669"/>
    <property type="project" value="UniProtKB-UniRule"/>
</dbReference>
<dbReference type="GO" id="GO:0009245">
    <property type="term" value="P:lipid A biosynthetic process"/>
    <property type="evidence" value="ECO:0007669"/>
    <property type="project" value="UniProtKB-UniRule"/>
</dbReference>
<dbReference type="GO" id="GO:0009103">
    <property type="term" value="P:lipopolysaccharide biosynthetic process"/>
    <property type="evidence" value="ECO:0007669"/>
    <property type="project" value="UniProtKB-UniRule"/>
</dbReference>
<dbReference type="GO" id="GO:0046677">
    <property type="term" value="P:response to antibiotic"/>
    <property type="evidence" value="ECO:0007669"/>
    <property type="project" value="UniProtKB-KW"/>
</dbReference>
<dbReference type="CDD" id="cd04187">
    <property type="entry name" value="DPM1_like_bac"/>
    <property type="match status" value="1"/>
</dbReference>
<dbReference type="Gene3D" id="3.90.550.10">
    <property type="entry name" value="Spore Coat Polysaccharide Biosynthesis Protein SpsA, Chain A"/>
    <property type="match status" value="1"/>
</dbReference>
<dbReference type="HAMAP" id="MF_01164">
    <property type="entry name" value="ArnC_transfer"/>
    <property type="match status" value="1"/>
</dbReference>
<dbReference type="InterPro" id="IPR022857">
    <property type="entry name" value="ArnC_tfrase"/>
</dbReference>
<dbReference type="InterPro" id="IPR001173">
    <property type="entry name" value="Glyco_trans_2-like"/>
</dbReference>
<dbReference type="InterPro" id="IPR050256">
    <property type="entry name" value="Glycosyltransferase_2"/>
</dbReference>
<dbReference type="InterPro" id="IPR029044">
    <property type="entry name" value="Nucleotide-diphossugar_trans"/>
</dbReference>
<dbReference type="NCBIfam" id="NF007986">
    <property type="entry name" value="PRK10714.1"/>
    <property type="match status" value="1"/>
</dbReference>
<dbReference type="PANTHER" id="PTHR48090:SF3">
    <property type="entry name" value="UNDECAPRENYL-PHOSPHATE 4-DEOXY-4-FORMAMIDO-L-ARABINOSE TRANSFERASE"/>
    <property type="match status" value="1"/>
</dbReference>
<dbReference type="PANTHER" id="PTHR48090">
    <property type="entry name" value="UNDECAPRENYL-PHOSPHATE 4-DEOXY-4-FORMAMIDO-L-ARABINOSE TRANSFERASE-RELATED"/>
    <property type="match status" value="1"/>
</dbReference>
<dbReference type="Pfam" id="PF00535">
    <property type="entry name" value="Glycos_transf_2"/>
    <property type="match status" value="1"/>
</dbReference>
<dbReference type="SUPFAM" id="SSF53448">
    <property type="entry name" value="Nucleotide-diphospho-sugar transferases"/>
    <property type="match status" value="1"/>
</dbReference>
<feature type="chain" id="PRO_0000380259" description="Undecaprenyl-phosphate 4-deoxy-4-formamido-L-arabinose transferase">
    <location>
        <begin position="1"/>
        <end position="326"/>
    </location>
</feature>
<feature type="transmembrane region" description="Helical" evidence="1">
    <location>
        <begin position="234"/>
        <end position="254"/>
    </location>
</feature>
<feature type="transmembrane region" description="Helical" evidence="1">
    <location>
        <begin position="269"/>
        <end position="289"/>
    </location>
</feature>
<sequence>MNNTDIKLVSVVIPVYNEEASLPALLSRVTAACDQLSQNYEVILIDDGSHDGSTELIRDAAAVEGSKLVGVLLNRNYGQHAAIMAGFETAKGDLVITLDADLQNPPEEIPRLVEAAMQGYDVVGTMRRNRQDSWFRKTASKLINKSVQKATGVHMSDYGCMLRAYRRHIIDAMLCCQERSTFIPILANSFARRTIELEVGHAERAHGESKYGLMHLINLMYDLVTCMTTTPLRLLSIVGSVVAGIGFTFSILLILMRLILGADWAADGVFTLFAILFTFVGVQLLGMGLLGEYIGRMYTDVRARPRYFIHQIVRSATTPSQQEAEQ</sequence>
<evidence type="ECO:0000255" key="1">
    <source>
        <dbReference type="HAMAP-Rule" id="MF_01164"/>
    </source>
</evidence>
<gene>
    <name evidence="1" type="primary">arnC</name>
    <name type="ordered locus">AHA_0991</name>
</gene>
<name>ARNC_AERHH</name>
<accession>A0KGY7</accession>
<comment type="function">
    <text evidence="1">Catalyzes the transfer of 4-deoxy-4-formamido-L-arabinose from UDP to undecaprenyl phosphate. The modified arabinose is attached to lipid A and is required for resistance to polymyxin and cationic antimicrobial peptides.</text>
</comment>
<comment type="catalytic activity">
    <reaction evidence="1">
        <text>UDP-4-deoxy-4-formamido-beta-L-arabinose + di-trans,octa-cis-undecaprenyl phosphate = 4-deoxy-4-formamido-alpha-L-arabinopyranosyl di-trans,octa-cis-undecaprenyl phosphate + UDP</text>
        <dbReference type="Rhea" id="RHEA:27722"/>
        <dbReference type="ChEBI" id="CHEBI:58223"/>
        <dbReference type="ChEBI" id="CHEBI:58709"/>
        <dbReference type="ChEBI" id="CHEBI:58909"/>
        <dbReference type="ChEBI" id="CHEBI:60392"/>
        <dbReference type="EC" id="2.4.2.53"/>
    </reaction>
</comment>
<comment type="pathway">
    <text evidence="1">Glycolipid biosynthesis; 4-amino-4-deoxy-alpha-L-arabinose undecaprenyl phosphate biosynthesis; 4-amino-4-deoxy-alpha-L-arabinose undecaprenyl phosphate from UDP-4-deoxy-4-formamido-beta-L-arabinose and undecaprenyl phosphate: step 1/2.</text>
</comment>
<comment type="pathway">
    <text evidence="1">Bacterial outer membrane biogenesis; lipopolysaccharide biosynthesis.</text>
</comment>
<comment type="subcellular location">
    <subcellularLocation>
        <location evidence="1">Cell inner membrane</location>
        <topology evidence="1">Multi-pass membrane protein</topology>
    </subcellularLocation>
</comment>
<comment type="similarity">
    <text evidence="1">Belongs to the glycosyltransferase 2 family.</text>
</comment>
<reference key="1">
    <citation type="journal article" date="2006" name="J. Bacteriol.">
        <title>Genome sequence of Aeromonas hydrophila ATCC 7966T: jack of all trades.</title>
        <authorList>
            <person name="Seshadri R."/>
            <person name="Joseph S.W."/>
            <person name="Chopra A.K."/>
            <person name="Sha J."/>
            <person name="Shaw J."/>
            <person name="Graf J."/>
            <person name="Haft D.H."/>
            <person name="Wu M."/>
            <person name="Ren Q."/>
            <person name="Rosovitz M.J."/>
            <person name="Madupu R."/>
            <person name="Tallon L."/>
            <person name="Kim M."/>
            <person name="Jin S."/>
            <person name="Vuong H."/>
            <person name="Stine O.C."/>
            <person name="Ali A."/>
            <person name="Horneman A.J."/>
            <person name="Heidelberg J.F."/>
        </authorList>
    </citation>
    <scope>NUCLEOTIDE SEQUENCE [LARGE SCALE GENOMIC DNA]</scope>
    <source>
        <strain>ATCC 7966 / DSM 30187 / BCRC 13018 / CCUG 14551 / JCM 1027 / KCTC 2358 / NCIMB 9240 / NCTC 8049</strain>
    </source>
</reference>
<keyword id="KW-0046">Antibiotic resistance</keyword>
<keyword id="KW-0997">Cell inner membrane</keyword>
<keyword id="KW-1003">Cell membrane</keyword>
<keyword id="KW-0328">Glycosyltransferase</keyword>
<keyword id="KW-0441">Lipid A biosynthesis</keyword>
<keyword id="KW-0444">Lipid biosynthesis</keyword>
<keyword id="KW-0443">Lipid metabolism</keyword>
<keyword id="KW-0448">Lipopolysaccharide biosynthesis</keyword>
<keyword id="KW-0472">Membrane</keyword>
<keyword id="KW-1185">Reference proteome</keyword>
<keyword id="KW-0808">Transferase</keyword>
<keyword id="KW-0812">Transmembrane</keyword>
<keyword id="KW-1133">Transmembrane helix</keyword>
<proteinExistence type="inferred from homology"/>